<accession>D5ANI3</accession>
<accession>P08718</accession>
<organism>
    <name type="scientific">Rhodobacter capsulatus (strain ATCC BAA-309 / NBRC 16581 / SB1003)</name>
    <dbReference type="NCBI Taxonomy" id="272942"/>
    <lineage>
        <taxon>Bacteria</taxon>
        <taxon>Pseudomonadati</taxon>
        <taxon>Pseudomonadota</taxon>
        <taxon>Alphaproteobacteria</taxon>
        <taxon>Rhodobacterales</taxon>
        <taxon>Rhodobacter group</taxon>
        <taxon>Rhodobacter</taxon>
    </lineage>
</organism>
<evidence type="ECO:0000250" key="1"/>
<evidence type="ECO:0000255" key="2"/>
<evidence type="ECO:0000305" key="3"/>
<comment type="function">
    <text evidence="1">The key enzymatic reactions in nitrogen fixation are catalyzed by the nitrogenase complex, which has 2 components: the iron protein and the molybdenum-iron protein.</text>
</comment>
<comment type="catalytic activity">
    <reaction>
        <text>N2 + 8 reduced [2Fe-2S]-[ferredoxin] + 16 ATP + 16 H2O = H2 + 8 oxidized [2Fe-2S]-[ferredoxin] + 2 NH4(+) + 16 ADP + 16 phosphate + 6 H(+)</text>
        <dbReference type="Rhea" id="RHEA:21448"/>
        <dbReference type="Rhea" id="RHEA-COMP:10000"/>
        <dbReference type="Rhea" id="RHEA-COMP:10001"/>
        <dbReference type="ChEBI" id="CHEBI:15377"/>
        <dbReference type="ChEBI" id="CHEBI:15378"/>
        <dbReference type="ChEBI" id="CHEBI:17997"/>
        <dbReference type="ChEBI" id="CHEBI:18276"/>
        <dbReference type="ChEBI" id="CHEBI:28938"/>
        <dbReference type="ChEBI" id="CHEBI:30616"/>
        <dbReference type="ChEBI" id="CHEBI:33737"/>
        <dbReference type="ChEBI" id="CHEBI:33738"/>
        <dbReference type="ChEBI" id="CHEBI:43474"/>
        <dbReference type="ChEBI" id="CHEBI:456216"/>
        <dbReference type="EC" id="1.18.6.1"/>
    </reaction>
</comment>
<comment type="cofactor">
    <cofactor evidence="1">
        <name>[4Fe-4S] cluster</name>
        <dbReference type="ChEBI" id="CHEBI:49883"/>
    </cofactor>
    <text evidence="1">Binds 1 [4Fe-4S] cluster per dimer.</text>
</comment>
<comment type="subunit">
    <text evidence="1">Homodimer.</text>
</comment>
<comment type="PTM">
    <text evidence="1">The reversible ADP-ribosylation of Arg-102 inactivates the nitrogenase reductase and regulates nitrogenase activity.</text>
</comment>
<comment type="similarity">
    <text evidence="3">Belongs to the NifH/BchL/ChlL family.</text>
</comment>
<protein>
    <recommendedName>
        <fullName>Nitrogenase iron protein 1</fullName>
        <ecNumber>1.18.6.1</ecNumber>
    </recommendedName>
    <alternativeName>
        <fullName>Nitrogenase Fe protein 1</fullName>
    </alternativeName>
    <alternativeName>
        <fullName>Nitrogenase component II</fullName>
    </alternativeName>
    <alternativeName>
        <fullName>Nitrogenase reductase</fullName>
    </alternativeName>
</protein>
<name>NIFH1_RHOCB</name>
<gene>
    <name type="primary">nifH</name>
    <name type="ordered locus">RCAP_rcc00572</name>
</gene>
<keyword id="KW-0004">4Fe-4S</keyword>
<keyword id="KW-0013">ADP-ribosylation</keyword>
<keyword id="KW-0067">ATP-binding</keyword>
<keyword id="KW-0408">Iron</keyword>
<keyword id="KW-0411">Iron-sulfur</keyword>
<keyword id="KW-0479">Metal-binding</keyword>
<keyword id="KW-0535">Nitrogen fixation</keyword>
<keyword id="KW-0547">Nucleotide-binding</keyword>
<keyword id="KW-0560">Oxidoreductase</keyword>
<keyword id="KW-1185">Reference proteome</keyword>
<dbReference type="EC" id="1.18.6.1"/>
<dbReference type="EMBL" id="X07866">
    <property type="protein sequence ID" value="CAA30716.1"/>
    <property type="molecule type" value="Genomic_DNA"/>
</dbReference>
<dbReference type="EMBL" id="CP001312">
    <property type="protein sequence ID" value="ADE84337.1"/>
    <property type="molecule type" value="Genomic_DNA"/>
</dbReference>
<dbReference type="PIR" id="JN0888">
    <property type="entry name" value="JN0888"/>
</dbReference>
<dbReference type="RefSeq" id="WP_013066316.1">
    <property type="nucleotide sequence ID" value="NC_014034.1"/>
</dbReference>
<dbReference type="SMR" id="D5ANI3"/>
<dbReference type="STRING" id="272942.RCAP_rcc00572"/>
<dbReference type="GeneID" id="31489522"/>
<dbReference type="KEGG" id="rcp:RCAP_rcc00572"/>
<dbReference type="eggNOG" id="COG1348">
    <property type="taxonomic scope" value="Bacteria"/>
</dbReference>
<dbReference type="HOGENOM" id="CLU_059373_0_0_5"/>
<dbReference type="OrthoDB" id="9778641at2"/>
<dbReference type="Proteomes" id="UP000002361">
    <property type="component" value="Chromosome"/>
</dbReference>
<dbReference type="GO" id="GO:0051539">
    <property type="term" value="F:4 iron, 4 sulfur cluster binding"/>
    <property type="evidence" value="ECO:0007669"/>
    <property type="project" value="UniProtKB-KW"/>
</dbReference>
<dbReference type="GO" id="GO:0005524">
    <property type="term" value="F:ATP binding"/>
    <property type="evidence" value="ECO:0007669"/>
    <property type="project" value="UniProtKB-UniRule"/>
</dbReference>
<dbReference type="GO" id="GO:0046872">
    <property type="term" value="F:metal ion binding"/>
    <property type="evidence" value="ECO:0007669"/>
    <property type="project" value="UniProtKB-KW"/>
</dbReference>
<dbReference type="GO" id="GO:0016163">
    <property type="term" value="F:nitrogenase activity"/>
    <property type="evidence" value="ECO:0007669"/>
    <property type="project" value="UniProtKB-UniRule"/>
</dbReference>
<dbReference type="GO" id="GO:0009399">
    <property type="term" value="P:nitrogen fixation"/>
    <property type="evidence" value="ECO:0007669"/>
    <property type="project" value="UniProtKB-UniRule"/>
</dbReference>
<dbReference type="CDD" id="cd02040">
    <property type="entry name" value="NifH"/>
    <property type="match status" value="1"/>
</dbReference>
<dbReference type="FunFam" id="3.40.50.300:FF:001379">
    <property type="entry name" value="Nitrogenase iron protein 1"/>
    <property type="match status" value="1"/>
</dbReference>
<dbReference type="Gene3D" id="3.40.50.300">
    <property type="entry name" value="P-loop containing nucleotide triphosphate hydrolases"/>
    <property type="match status" value="1"/>
</dbReference>
<dbReference type="HAMAP" id="MF_00533">
    <property type="entry name" value="NifH"/>
    <property type="match status" value="1"/>
</dbReference>
<dbReference type="InterPro" id="IPR030655">
    <property type="entry name" value="NifH/chlL_CS"/>
</dbReference>
<dbReference type="InterPro" id="IPR000392">
    <property type="entry name" value="NifH/frxC"/>
</dbReference>
<dbReference type="InterPro" id="IPR005977">
    <property type="entry name" value="Nitrogenase_Fe_NifH"/>
</dbReference>
<dbReference type="InterPro" id="IPR027417">
    <property type="entry name" value="P-loop_NTPase"/>
</dbReference>
<dbReference type="NCBIfam" id="TIGR01287">
    <property type="entry name" value="nifH"/>
    <property type="match status" value="1"/>
</dbReference>
<dbReference type="PANTHER" id="PTHR42864">
    <property type="entry name" value="LIGHT-INDEPENDENT PROTOCHLOROPHYLLIDE REDUCTASE IRON-SULFUR ATP-BINDING PROTEIN"/>
    <property type="match status" value="1"/>
</dbReference>
<dbReference type="PANTHER" id="PTHR42864:SF2">
    <property type="entry name" value="LIGHT-INDEPENDENT PROTOCHLOROPHYLLIDE REDUCTASE IRON-SULFUR ATP-BINDING PROTEIN"/>
    <property type="match status" value="1"/>
</dbReference>
<dbReference type="Pfam" id="PF00142">
    <property type="entry name" value="Fer4_NifH"/>
    <property type="match status" value="1"/>
</dbReference>
<dbReference type="PIRSF" id="PIRSF000363">
    <property type="entry name" value="Nitrogenase_iron"/>
    <property type="match status" value="1"/>
</dbReference>
<dbReference type="PRINTS" id="PR00091">
    <property type="entry name" value="NITROGNASEII"/>
</dbReference>
<dbReference type="SUPFAM" id="SSF52540">
    <property type="entry name" value="P-loop containing nucleoside triphosphate hydrolases"/>
    <property type="match status" value="1"/>
</dbReference>
<dbReference type="PROSITE" id="PS00746">
    <property type="entry name" value="NIFH_FRXC_1"/>
    <property type="match status" value="1"/>
</dbReference>
<dbReference type="PROSITE" id="PS00692">
    <property type="entry name" value="NIFH_FRXC_2"/>
    <property type="match status" value="1"/>
</dbReference>
<dbReference type="PROSITE" id="PS51026">
    <property type="entry name" value="NIFH_FRXC_3"/>
    <property type="match status" value="1"/>
</dbReference>
<proteinExistence type="inferred from homology"/>
<sequence>MGKLRQIAFYGKGGIGKSTTSQNTLAALVEMGQKILIVGCDPKADSTRLILNTKLQDTVLHLAAEAGSVEDLEVEDVVKIGYKGIKCTEAGGPEPGVGCAGRGVITAINFLEENGAYDDVDYVSYDVLGDVVCGGFAMPIRENKAQEIYIVMSGEMMALYAANNIAKGILKYANSGGVRLGGLICNERKTDRELELAEALAAKLGCKMIHFVPRNNVVQHAELRRETVIQYDPTCSQAQEYRELARKIHENSGKGVIPTPITMEELEEMLMDFGIMQSEEDREKQIAEMEAAMKA</sequence>
<reference key="1">
    <citation type="journal article" date="1988" name="Nucleic Acids Res.">
        <title>The DNA sequence of the Rhodobacter capsulatus nifH gene.</title>
        <authorList>
            <person name="Jones R."/>
            <person name="Haselkorn R."/>
        </authorList>
    </citation>
    <scope>NUCLEOTIDE SEQUENCE [GENOMIC DNA]</scope>
    <source>
        <strain>ATCC BAA-309 / NBRC 16581 / SB1003</strain>
    </source>
</reference>
<reference key="2">
    <citation type="journal article" date="2010" name="J. Bacteriol.">
        <title>Complete genome sequence of the photosynthetic purple nonsulfur bacterium Rhodobacter capsulatus SB 1003.</title>
        <authorList>
            <person name="Strnad H."/>
            <person name="Lapidus A."/>
            <person name="Paces J."/>
            <person name="Ulbrich P."/>
            <person name="Vlcek C."/>
            <person name="Paces V."/>
            <person name="Haselkorn R."/>
        </authorList>
    </citation>
    <scope>NUCLEOTIDE SEQUENCE [LARGE SCALE GENOMIC DNA]</scope>
    <source>
        <strain>ATCC BAA-309 / NBRC 16581 / SB1003</strain>
    </source>
</reference>
<feature type="chain" id="PRO_0000410440" description="Nitrogenase iron protein 1">
    <location>
        <begin position="1"/>
        <end position="295"/>
    </location>
</feature>
<feature type="binding site" evidence="2">
    <location>
        <begin position="11"/>
        <end position="18"/>
    </location>
    <ligand>
        <name>ATP</name>
        <dbReference type="ChEBI" id="CHEBI:30616"/>
    </ligand>
</feature>
<feature type="binding site" evidence="1">
    <location>
        <position position="99"/>
    </location>
    <ligand>
        <name>[4Fe-4S] cluster</name>
        <dbReference type="ChEBI" id="CHEBI:49883"/>
        <note>ligand shared between dimeric partners</note>
    </ligand>
</feature>
<feature type="binding site" evidence="1">
    <location>
        <position position="133"/>
    </location>
    <ligand>
        <name>[4Fe-4S] cluster</name>
        <dbReference type="ChEBI" id="CHEBI:49883"/>
        <note>ligand shared between dimeric partners</note>
    </ligand>
</feature>
<feature type="modified residue" description="ADP-ribosylarginine; by dinitrogenase reductase ADP-ribosyltransferase" evidence="1">
    <location>
        <position position="102"/>
    </location>
</feature>
<feature type="sequence conflict" description="In Ref. 1; CAA30716." evidence="3" ref="1">
    <original>A</original>
    <variation>V</variation>
    <location>
        <position position="66"/>
    </location>
</feature>